<comment type="function">
    <text evidence="1">Oxygenase that can act as both a histone lysine demethylase and a ribosomal histidine hydroxylase. Specifically demethylates 'Lys-4' (H3K4me) and 'Lys-36' (H3K36me) of histone H3, thereby playing a central role in histone code (By similarity).</text>
</comment>
<comment type="catalytic activity">
    <reaction>
        <text>N(6),N(6)-dimethyl-L-lysyl(36)-[histone H3] + 2 2-oxoglutarate + 2 O2 = L-lysyl(36)-[histone H3] + 2 formaldehyde + 2 succinate + 2 CO2</text>
        <dbReference type="Rhea" id="RHEA:42032"/>
        <dbReference type="Rhea" id="RHEA-COMP:9785"/>
        <dbReference type="Rhea" id="RHEA-COMP:9787"/>
        <dbReference type="ChEBI" id="CHEBI:15379"/>
        <dbReference type="ChEBI" id="CHEBI:16526"/>
        <dbReference type="ChEBI" id="CHEBI:16810"/>
        <dbReference type="ChEBI" id="CHEBI:16842"/>
        <dbReference type="ChEBI" id="CHEBI:29969"/>
        <dbReference type="ChEBI" id="CHEBI:30031"/>
        <dbReference type="ChEBI" id="CHEBI:61976"/>
        <dbReference type="EC" id="1.14.11.27"/>
    </reaction>
</comment>
<comment type="cofactor">
    <cofactor evidence="1">
        <name>Fe(2+)</name>
        <dbReference type="ChEBI" id="CHEBI:29033"/>
    </cofactor>
    <text evidence="1">Binds 1 Fe(2+) ion per subunit.</text>
</comment>
<comment type="subcellular location">
    <subcellularLocation>
        <location evidence="1">Nucleus</location>
    </subcellularLocation>
</comment>
<comment type="similarity">
    <text evidence="4">Belongs to the ROX family. NO66 subfamily.</text>
</comment>
<name>NO66_DROSI</name>
<reference key="1">
    <citation type="journal article" date="2007" name="Nature">
        <title>Evolution of genes and genomes on the Drosophila phylogeny.</title>
        <authorList>
            <consortium name="Drosophila 12 genomes consortium"/>
        </authorList>
    </citation>
    <scope>NUCLEOTIDE SEQUENCE [LARGE SCALE GENOMIC DNA]</scope>
</reference>
<proteinExistence type="inferred from homology"/>
<accession>B4R4H1</accession>
<dbReference type="EC" id="1.14.11.-"/>
<dbReference type="EC" id="1.14.11.27"/>
<dbReference type="EMBL" id="CM000366">
    <property type="protein sequence ID" value="EDX17061.1"/>
    <property type="molecule type" value="Genomic_DNA"/>
</dbReference>
<dbReference type="SMR" id="B4R4H1"/>
<dbReference type="STRING" id="7240.B4R4H1"/>
<dbReference type="HOGENOM" id="CLU_013645_2_1_1"/>
<dbReference type="OrthoDB" id="425950at2759"/>
<dbReference type="PhylomeDB" id="B4R4H1"/>
<dbReference type="Proteomes" id="UP000000304">
    <property type="component" value="Chromosome X"/>
</dbReference>
<dbReference type="GO" id="GO:0005730">
    <property type="term" value="C:nucleolus"/>
    <property type="evidence" value="ECO:0007669"/>
    <property type="project" value="TreeGrafter"/>
</dbReference>
<dbReference type="GO" id="GO:0005634">
    <property type="term" value="C:nucleus"/>
    <property type="evidence" value="ECO:0000250"/>
    <property type="project" value="UniProtKB"/>
</dbReference>
<dbReference type="GO" id="GO:0016706">
    <property type="term" value="F:2-oxoglutarate-dependent dioxygenase activity"/>
    <property type="evidence" value="ECO:0000250"/>
    <property type="project" value="UniProtKB"/>
</dbReference>
<dbReference type="GO" id="GO:0051864">
    <property type="term" value="F:histone H3K36 demethylase activity"/>
    <property type="evidence" value="ECO:0000250"/>
    <property type="project" value="UniProtKB"/>
</dbReference>
<dbReference type="GO" id="GO:0140680">
    <property type="term" value="F:histone H3K36me/H3K36me2 demethylase activity"/>
    <property type="evidence" value="ECO:0007669"/>
    <property type="project" value="UniProtKB-EC"/>
</dbReference>
<dbReference type="GO" id="GO:0034647">
    <property type="term" value="F:histone H3K4me/H3K4me2/H3K4me3 demethylase activity"/>
    <property type="evidence" value="ECO:0000250"/>
    <property type="project" value="UniProtKB"/>
</dbReference>
<dbReference type="GO" id="GO:0005506">
    <property type="term" value="F:iron ion binding"/>
    <property type="evidence" value="ECO:0000250"/>
    <property type="project" value="UniProtKB"/>
</dbReference>
<dbReference type="GO" id="GO:0045892">
    <property type="term" value="P:negative regulation of DNA-templated transcription"/>
    <property type="evidence" value="ECO:0000250"/>
    <property type="project" value="UniProtKB"/>
</dbReference>
<dbReference type="FunFam" id="2.60.120.650:FF:000013">
    <property type="entry name" value="Ribosomal oxygenase 1"/>
    <property type="match status" value="1"/>
</dbReference>
<dbReference type="FunFam" id="1.10.10.1500:FF:000001">
    <property type="entry name" value="ribosomal oxygenase 1 isoform X1"/>
    <property type="match status" value="1"/>
</dbReference>
<dbReference type="FunFam" id="3.90.930.40:FF:000001">
    <property type="entry name" value="ribosomal oxygenase 1 isoform X1"/>
    <property type="match status" value="1"/>
</dbReference>
<dbReference type="Gene3D" id="3.90.930.40">
    <property type="match status" value="1"/>
</dbReference>
<dbReference type="Gene3D" id="2.60.120.650">
    <property type="entry name" value="Cupin"/>
    <property type="match status" value="1"/>
</dbReference>
<dbReference type="Gene3D" id="1.10.10.1500">
    <property type="entry name" value="JmjC domain-containing ribosomal oxygenase (ROX), dimer domain"/>
    <property type="match status" value="1"/>
</dbReference>
<dbReference type="InterPro" id="IPR003347">
    <property type="entry name" value="JmjC_dom"/>
</dbReference>
<dbReference type="InterPro" id="IPR039994">
    <property type="entry name" value="NO66-like"/>
</dbReference>
<dbReference type="InterPro" id="IPR049043">
    <property type="entry name" value="RIOX1/NO66-like_C_WH"/>
</dbReference>
<dbReference type="PANTHER" id="PTHR13096">
    <property type="entry name" value="MINA53 MYC INDUCED NUCLEAR ANTIGEN"/>
    <property type="match status" value="1"/>
</dbReference>
<dbReference type="PANTHER" id="PTHR13096:SF8">
    <property type="entry name" value="RIBOSOMAL OXYGENASE 1"/>
    <property type="match status" value="1"/>
</dbReference>
<dbReference type="Pfam" id="PF08007">
    <property type="entry name" value="JmjC_2"/>
    <property type="match status" value="1"/>
</dbReference>
<dbReference type="Pfam" id="PF21233">
    <property type="entry name" value="RIOX1_C_WH"/>
    <property type="match status" value="1"/>
</dbReference>
<dbReference type="SUPFAM" id="SSF51197">
    <property type="entry name" value="Clavaminate synthase-like"/>
    <property type="match status" value="1"/>
</dbReference>
<dbReference type="PROSITE" id="PS51184">
    <property type="entry name" value="JMJC"/>
    <property type="match status" value="1"/>
</dbReference>
<protein>
    <recommendedName>
        <fullName>Bifunctional lysine-specific demethylase and histidyl-hydroxylase NO66</fullName>
        <ecNumber>1.14.11.-</ecNumber>
        <ecNumber>1.14.11.27</ecNumber>
    </recommendedName>
    <alternativeName>
        <fullName>Histone lysine demethylase NO66</fullName>
    </alternativeName>
</protein>
<gene>
    <name type="ORF">GD16684</name>
</gene>
<sequence>MEKVTNSAAAKPQGNNKKQESAYNGTAKDKKKPNLDIETTDSDLLSDIHLDGTKEQKVQTLFSKVFEDTGPSTAKTADRKRRLQAEADANNNDTEKASKLAKTSVATTDMDLRVTRKQHTFYMKVQALLAEHAEKESTKKASKMAKISEADLILFMTQKEIEYYMKVKALIAKCAEEGSKLLDNWTSSKDIAKTADHERRLQAEADAKNNDTKKAGQSAKESVATTDMQLNVIKEQMEHCKKVQALLANESKGAEKESKVLDYSTGPSTSSKEAAAAKTADHERRLLAEADVNNNDTEKAGQSAMESVATQGASATERKQSFSLGLEHTSPIQVNGAALACPLVRKSLPPGEANSCPPPPKRDPAAVKSSVKIIKVKAPEEGNNNNDEKEMSTETSETHKTDSVEEGRRVVKWIIFPIKPNFFFKYFWEQTACLVQRTNPKYFQSLISFKMLDEILIRHHLDFTVNLDVTTYKNGKRETLNPEGRALPPAVWGFYSEGCSIRLLNPSAYLTRLREVCTVLQEFFHCKVEANMYLTPPNSQGFAPHYDDIEAFVIQVEGRKRWLLYEPPKEADHLARISSGNYDQEQLGKPIIDEVLSAGDVLYFPRGTVHQAITEEQQHSLHITLSVYQQQAYANLLETLMPMVLKKAVDRSVALRRGLPLHTFQVLGNAYKANDCGSRQLLVENVQKLVTKYLIPSEDDIDEAVDQMAKKFQHEALPPIVLPSEEVRTVHGARSGADEQGNCVCDYKFNEKTSVRLLRANILRLVTEPDGSVRIYHHADNGLDYCKYEPYFMEILPEEAKAVELLISAYPYYLTIDQLPLKSSARKVEVATALWEHGLLMTEKPFK</sequence>
<organism>
    <name type="scientific">Drosophila simulans</name>
    <name type="common">Fruit fly</name>
    <dbReference type="NCBI Taxonomy" id="7240"/>
    <lineage>
        <taxon>Eukaryota</taxon>
        <taxon>Metazoa</taxon>
        <taxon>Ecdysozoa</taxon>
        <taxon>Arthropoda</taxon>
        <taxon>Hexapoda</taxon>
        <taxon>Insecta</taxon>
        <taxon>Pterygota</taxon>
        <taxon>Neoptera</taxon>
        <taxon>Endopterygota</taxon>
        <taxon>Diptera</taxon>
        <taxon>Brachycera</taxon>
        <taxon>Muscomorpha</taxon>
        <taxon>Ephydroidea</taxon>
        <taxon>Drosophilidae</taxon>
        <taxon>Drosophila</taxon>
        <taxon>Sophophora</taxon>
    </lineage>
</organism>
<evidence type="ECO:0000250" key="1"/>
<evidence type="ECO:0000255" key="2">
    <source>
        <dbReference type="PROSITE-ProRule" id="PRU00538"/>
    </source>
</evidence>
<evidence type="ECO:0000256" key="3">
    <source>
        <dbReference type="SAM" id="MobiDB-lite"/>
    </source>
</evidence>
<evidence type="ECO:0000305" key="4"/>
<feature type="chain" id="PRO_0000390991" description="Bifunctional lysine-specific demethylase and histidyl-hydroxylase NO66">
    <location>
        <begin position="1"/>
        <end position="847"/>
    </location>
</feature>
<feature type="domain" description="JmjC" evidence="2">
    <location>
        <begin position="499"/>
        <end position="644"/>
    </location>
</feature>
<feature type="region of interest" description="Disordered" evidence="3">
    <location>
        <begin position="1"/>
        <end position="45"/>
    </location>
</feature>
<feature type="region of interest" description="Disordered" evidence="3">
    <location>
        <begin position="203"/>
        <end position="223"/>
    </location>
</feature>
<feature type="region of interest" description="Disordered" evidence="3">
    <location>
        <begin position="254"/>
        <end position="320"/>
    </location>
</feature>
<feature type="region of interest" description="Disordered" evidence="3">
    <location>
        <begin position="377"/>
        <end position="401"/>
    </location>
</feature>
<feature type="compositionally biased region" description="Polar residues" evidence="3">
    <location>
        <begin position="1"/>
        <end position="24"/>
    </location>
</feature>
<feature type="compositionally biased region" description="Basic and acidic residues" evidence="3">
    <location>
        <begin position="203"/>
        <end position="214"/>
    </location>
</feature>
<feature type="compositionally biased region" description="Low complexity" evidence="3">
    <location>
        <begin position="268"/>
        <end position="278"/>
    </location>
</feature>
<feature type="compositionally biased region" description="Basic and acidic residues" evidence="3">
    <location>
        <begin position="279"/>
        <end position="288"/>
    </location>
</feature>
<feature type="compositionally biased region" description="Polar residues" evidence="3">
    <location>
        <begin position="304"/>
        <end position="314"/>
    </location>
</feature>
<feature type="compositionally biased region" description="Basic and acidic residues" evidence="3">
    <location>
        <begin position="386"/>
        <end position="401"/>
    </location>
</feature>
<feature type="binding site" evidence="2">
    <location>
        <position position="545"/>
    </location>
    <ligand>
        <name>Fe cation</name>
        <dbReference type="ChEBI" id="CHEBI:24875"/>
        <note>catalytic</note>
    </ligand>
</feature>
<feature type="binding site" evidence="2">
    <location>
        <position position="547"/>
    </location>
    <ligand>
        <name>Fe cation</name>
        <dbReference type="ChEBI" id="CHEBI:24875"/>
        <note>catalytic</note>
    </ligand>
</feature>
<feature type="binding site" evidence="2">
    <location>
        <position position="610"/>
    </location>
    <ligand>
        <name>Fe cation</name>
        <dbReference type="ChEBI" id="CHEBI:24875"/>
        <note>catalytic</note>
    </ligand>
</feature>
<feature type="modified residue" description="Phosphoserine" evidence="1">
    <location>
        <position position="323"/>
    </location>
</feature>
<feature type="modified residue" description="Phosphothreonine" evidence="1">
    <location>
        <position position="329"/>
    </location>
</feature>
<feature type="modified residue" description="Phosphoserine" evidence="1">
    <location>
        <position position="330"/>
    </location>
</feature>
<keyword id="KW-0156">Chromatin regulator</keyword>
<keyword id="KW-0223">Dioxygenase</keyword>
<keyword id="KW-0408">Iron</keyword>
<keyword id="KW-0479">Metal-binding</keyword>
<keyword id="KW-0539">Nucleus</keyword>
<keyword id="KW-0560">Oxidoreductase</keyword>
<keyword id="KW-0597">Phosphoprotein</keyword>
<keyword id="KW-1185">Reference proteome</keyword>
<keyword id="KW-0678">Repressor</keyword>
<keyword id="KW-0804">Transcription</keyword>
<keyword id="KW-0805">Transcription regulation</keyword>